<name>UPP_STRSL</name>
<evidence type="ECO:0000255" key="1">
    <source>
        <dbReference type="HAMAP-Rule" id="MF_01218"/>
    </source>
</evidence>
<accession>P36399</accession>
<comment type="function">
    <text evidence="1">Catalyzes the conversion of uracil and 5-phospho-alpha-D-ribose 1-diphosphate (PRPP) to UMP and diphosphate.</text>
</comment>
<comment type="catalytic activity">
    <reaction evidence="1">
        <text>UMP + diphosphate = 5-phospho-alpha-D-ribose 1-diphosphate + uracil</text>
        <dbReference type="Rhea" id="RHEA:13017"/>
        <dbReference type="ChEBI" id="CHEBI:17568"/>
        <dbReference type="ChEBI" id="CHEBI:33019"/>
        <dbReference type="ChEBI" id="CHEBI:57865"/>
        <dbReference type="ChEBI" id="CHEBI:58017"/>
        <dbReference type="EC" id="2.4.2.9"/>
    </reaction>
</comment>
<comment type="cofactor">
    <cofactor evidence="1">
        <name>Mg(2+)</name>
        <dbReference type="ChEBI" id="CHEBI:18420"/>
    </cofactor>
    <text evidence="1">Binds 1 Mg(2+) ion per subunit. The magnesium is bound as Mg-PRPP.</text>
</comment>
<comment type="activity regulation">
    <text evidence="1">Allosterically activated by GTP.</text>
</comment>
<comment type="pathway">
    <text evidence="1">Pyrimidine metabolism; UMP biosynthesis via salvage pathway; UMP from uracil: step 1/1.</text>
</comment>
<comment type="similarity">
    <text evidence="1">Belongs to the UPRTase family.</text>
</comment>
<keyword id="KW-0021">Allosteric enzyme</keyword>
<keyword id="KW-0328">Glycosyltransferase</keyword>
<keyword id="KW-0342">GTP-binding</keyword>
<keyword id="KW-0460">Magnesium</keyword>
<keyword id="KW-0547">Nucleotide-binding</keyword>
<keyword id="KW-0808">Transferase</keyword>
<sequence length="209" mass="22979">MGKFQVISHPLIQHKLSILRREDTSTKDFRELVNEIAMLMGYEVSRDLPLEEVEIQTPITKTVQKQLSGKKLAIVPILRAGIGMVDGFLSLVPAAKVGHIGMYRDEETLEPVEYLVKLPEDIDQRQIFVVDPMLATGGSAILAVDSLKKRGAANIKFVCLVAAPEGVKKLQDAHPDIDIYTASLDEKLNENGYIVPGLGDAGDRLFGTK</sequence>
<protein>
    <recommendedName>
        <fullName evidence="1">Uracil phosphoribosyltransferase</fullName>
        <ecNumber evidence="1">2.4.2.9</ecNumber>
    </recommendedName>
    <alternativeName>
        <fullName evidence="1">UMP pyrophosphorylase</fullName>
    </alternativeName>
    <alternativeName>
        <fullName evidence="1">UPRTase</fullName>
    </alternativeName>
</protein>
<organism>
    <name type="scientific">Streptococcus salivarius</name>
    <dbReference type="NCBI Taxonomy" id="1304"/>
    <lineage>
        <taxon>Bacteria</taxon>
        <taxon>Bacillati</taxon>
        <taxon>Bacillota</taxon>
        <taxon>Bacilli</taxon>
        <taxon>Lactobacillales</taxon>
        <taxon>Streptococcaceae</taxon>
        <taxon>Streptococcus</taxon>
    </lineage>
</organism>
<feature type="chain" id="PRO_0000120900" description="Uracil phosphoribosyltransferase">
    <location>
        <begin position="1"/>
        <end position="209"/>
    </location>
</feature>
<feature type="binding site" evidence="1">
    <location>
        <position position="79"/>
    </location>
    <ligand>
        <name>5-phospho-alpha-D-ribose 1-diphosphate</name>
        <dbReference type="ChEBI" id="CHEBI:58017"/>
    </ligand>
</feature>
<feature type="binding site" evidence="1">
    <location>
        <position position="104"/>
    </location>
    <ligand>
        <name>5-phospho-alpha-D-ribose 1-diphosphate</name>
        <dbReference type="ChEBI" id="CHEBI:58017"/>
    </ligand>
</feature>
<feature type="binding site" evidence="1">
    <location>
        <begin position="131"/>
        <end position="139"/>
    </location>
    <ligand>
        <name>5-phospho-alpha-D-ribose 1-diphosphate</name>
        <dbReference type="ChEBI" id="CHEBI:58017"/>
    </ligand>
</feature>
<feature type="binding site" evidence="1">
    <location>
        <position position="194"/>
    </location>
    <ligand>
        <name>uracil</name>
        <dbReference type="ChEBI" id="CHEBI:17568"/>
    </ligand>
</feature>
<feature type="binding site" evidence="1">
    <location>
        <begin position="199"/>
        <end position="201"/>
    </location>
    <ligand>
        <name>uracil</name>
        <dbReference type="ChEBI" id="CHEBI:17568"/>
    </ligand>
</feature>
<feature type="binding site" evidence="1">
    <location>
        <position position="200"/>
    </location>
    <ligand>
        <name>5-phospho-alpha-D-ribose 1-diphosphate</name>
        <dbReference type="ChEBI" id="CHEBI:58017"/>
    </ligand>
</feature>
<proteinExistence type="inferred from homology"/>
<gene>
    <name evidence="1" type="primary">upp</name>
</gene>
<reference key="1">
    <citation type="journal article" date="1993" name="J. Gen. Microbiol.">
        <title>The ftf gene encoding the cell-bound fructosyltransferase of Streptococcus salivarius ATCC 25975 is preceded by an insertion sequence and followed by FUR1 and clpP homologues.</title>
        <authorList>
            <person name="Giffard P.M."/>
            <person name="Rathsam C."/>
            <person name="Kwan E."/>
            <person name="Kwan D.W.L."/>
            <person name="Bunny K.L."/>
            <person name="Koo S.-P."/>
            <person name="Jacques N.A."/>
        </authorList>
    </citation>
    <scope>NUCLEOTIDE SEQUENCE [GENOMIC DNA]</scope>
    <source>
        <strain>ATCC 25975</strain>
    </source>
</reference>
<reference key="2">
    <citation type="journal article" date="1993" name="J. Bacteriol.">
        <title>The cell-bound fructosyltransferase of Streptococcus salivarius: the carboxyl terminus specifies attachment in a Streptococcus gordonii model system.</title>
        <authorList>
            <person name="Rathsam C."/>
            <person name="Giffard P.M."/>
            <person name="Jacques N.A."/>
        </authorList>
    </citation>
    <scope>NUCLEOTIDE SEQUENCE [GENOMIC DNA] OF 1-127</scope>
    <source>
        <strain>ATCC 25975</strain>
    </source>
</reference>
<dbReference type="EC" id="2.4.2.9" evidence="1"/>
<dbReference type="EMBL" id="L07793">
    <property type="protein sequence ID" value="AAA26890.1"/>
    <property type="molecule type" value="Genomic_DNA"/>
</dbReference>
<dbReference type="EMBL" id="L08445">
    <property type="protein sequence ID" value="AAA71926.2"/>
    <property type="molecule type" value="Genomic_DNA"/>
</dbReference>
<dbReference type="RefSeq" id="WP_002883819.1">
    <property type="nucleotide sequence ID" value="NZ_WQNM01000018.1"/>
</dbReference>
<dbReference type="SMR" id="P36399"/>
<dbReference type="STRING" id="1304.HMPREF3219_0200021"/>
<dbReference type="GeneID" id="93791527"/>
<dbReference type="OMA" id="KHKIGLM"/>
<dbReference type="UniPathway" id="UPA00574">
    <property type="reaction ID" value="UER00636"/>
</dbReference>
<dbReference type="GO" id="GO:0005525">
    <property type="term" value="F:GTP binding"/>
    <property type="evidence" value="ECO:0007669"/>
    <property type="project" value="UniProtKB-KW"/>
</dbReference>
<dbReference type="GO" id="GO:0000287">
    <property type="term" value="F:magnesium ion binding"/>
    <property type="evidence" value="ECO:0007669"/>
    <property type="project" value="UniProtKB-UniRule"/>
</dbReference>
<dbReference type="GO" id="GO:0004845">
    <property type="term" value="F:uracil phosphoribosyltransferase activity"/>
    <property type="evidence" value="ECO:0007669"/>
    <property type="project" value="UniProtKB-UniRule"/>
</dbReference>
<dbReference type="GO" id="GO:0044206">
    <property type="term" value="P:UMP salvage"/>
    <property type="evidence" value="ECO:0007669"/>
    <property type="project" value="UniProtKB-UniRule"/>
</dbReference>
<dbReference type="GO" id="GO:0006223">
    <property type="term" value="P:uracil salvage"/>
    <property type="evidence" value="ECO:0007669"/>
    <property type="project" value="InterPro"/>
</dbReference>
<dbReference type="CDD" id="cd06223">
    <property type="entry name" value="PRTases_typeI"/>
    <property type="match status" value="1"/>
</dbReference>
<dbReference type="FunFam" id="3.40.50.2020:FF:000003">
    <property type="entry name" value="Uracil phosphoribosyltransferase"/>
    <property type="match status" value="1"/>
</dbReference>
<dbReference type="Gene3D" id="3.40.50.2020">
    <property type="match status" value="1"/>
</dbReference>
<dbReference type="HAMAP" id="MF_01218_B">
    <property type="entry name" value="Upp_B"/>
    <property type="match status" value="1"/>
</dbReference>
<dbReference type="InterPro" id="IPR000836">
    <property type="entry name" value="PRibTrfase_dom"/>
</dbReference>
<dbReference type="InterPro" id="IPR029057">
    <property type="entry name" value="PRTase-like"/>
</dbReference>
<dbReference type="InterPro" id="IPR034332">
    <property type="entry name" value="Upp_B"/>
</dbReference>
<dbReference type="InterPro" id="IPR050054">
    <property type="entry name" value="UPRTase/APRTase"/>
</dbReference>
<dbReference type="InterPro" id="IPR005765">
    <property type="entry name" value="Ura_phspho_trans"/>
</dbReference>
<dbReference type="NCBIfam" id="NF001097">
    <property type="entry name" value="PRK00129.1"/>
    <property type="match status" value="1"/>
</dbReference>
<dbReference type="NCBIfam" id="TIGR01091">
    <property type="entry name" value="upp"/>
    <property type="match status" value="1"/>
</dbReference>
<dbReference type="PANTHER" id="PTHR32315">
    <property type="entry name" value="ADENINE PHOSPHORIBOSYLTRANSFERASE"/>
    <property type="match status" value="1"/>
</dbReference>
<dbReference type="PANTHER" id="PTHR32315:SF4">
    <property type="entry name" value="URACIL PHOSPHORIBOSYLTRANSFERASE, CHLOROPLASTIC"/>
    <property type="match status" value="1"/>
</dbReference>
<dbReference type="Pfam" id="PF14681">
    <property type="entry name" value="UPRTase"/>
    <property type="match status" value="1"/>
</dbReference>
<dbReference type="SUPFAM" id="SSF53271">
    <property type="entry name" value="PRTase-like"/>
    <property type="match status" value="1"/>
</dbReference>